<accession>Q0TNY9</accession>
<protein>
    <recommendedName>
        <fullName evidence="1">Nucleoside diphosphate kinase</fullName>
        <shortName evidence="1">NDK</shortName>
        <shortName evidence="1">NDP kinase</shortName>
        <ecNumber evidence="1">2.7.4.6</ecNumber>
    </recommendedName>
    <alternativeName>
        <fullName evidence="1">Nucleoside-2-P kinase</fullName>
    </alternativeName>
</protein>
<sequence length="143" mass="16401">MRLEKSLVLIKPDAVERNLIGKILEVYEGAGLKIKAMEMKQINKEFAEKHYEEHRDKQFFNSLIKYITRSPLVALILEGEDAINKIRSLNGATNPEKAEFGTIRRRFALSGTENSVHASDSIESAEKEIKLWFPKVFYEEICG</sequence>
<feature type="chain" id="PRO_0000267773" description="Nucleoside diphosphate kinase">
    <location>
        <begin position="1"/>
        <end position="143"/>
    </location>
</feature>
<feature type="active site" description="Pros-phosphohistidine intermediate" evidence="1">
    <location>
        <position position="117"/>
    </location>
</feature>
<feature type="binding site" evidence="1">
    <location>
        <position position="11"/>
    </location>
    <ligand>
        <name>ATP</name>
        <dbReference type="ChEBI" id="CHEBI:30616"/>
    </ligand>
</feature>
<feature type="binding site" evidence="1">
    <location>
        <position position="59"/>
    </location>
    <ligand>
        <name>ATP</name>
        <dbReference type="ChEBI" id="CHEBI:30616"/>
    </ligand>
</feature>
<feature type="binding site" evidence="1">
    <location>
        <position position="87"/>
    </location>
    <ligand>
        <name>ATP</name>
        <dbReference type="ChEBI" id="CHEBI:30616"/>
    </ligand>
</feature>
<feature type="binding site" evidence="1">
    <location>
        <position position="93"/>
    </location>
    <ligand>
        <name>ATP</name>
        <dbReference type="ChEBI" id="CHEBI:30616"/>
    </ligand>
</feature>
<feature type="binding site" evidence="1">
    <location>
        <position position="104"/>
    </location>
    <ligand>
        <name>ATP</name>
        <dbReference type="ChEBI" id="CHEBI:30616"/>
    </ligand>
</feature>
<feature type="binding site" evidence="1">
    <location>
        <position position="114"/>
    </location>
    <ligand>
        <name>ATP</name>
        <dbReference type="ChEBI" id="CHEBI:30616"/>
    </ligand>
</feature>
<gene>
    <name evidence="1" type="primary">ndk</name>
    <name type="ordered locus">CPF_2227</name>
</gene>
<reference key="1">
    <citation type="journal article" date="2006" name="Genome Res.">
        <title>Skewed genomic variability in strains of the toxigenic bacterial pathogen, Clostridium perfringens.</title>
        <authorList>
            <person name="Myers G.S.A."/>
            <person name="Rasko D.A."/>
            <person name="Cheung J.K."/>
            <person name="Ravel J."/>
            <person name="Seshadri R."/>
            <person name="DeBoy R.T."/>
            <person name="Ren Q."/>
            <person name="Varga J."/>
            <person name="Awad M.M."/>
            <person name="Brinkac L.M."/>
            <person name="Daugherty S.C."/>
            <person name="Haft D.H."/>
            <person name="Dodson R.J."/>
            <person name="Madupu R."/>
            <person name="Nelson W.C."/>
            <person name="Rosovitz M.J."/>
            <person name="Sullivan S.A."/>
            <person name="Khouri H."/>
            <person name="Dimitrov G.I."/>
            <person name="Watkins K.L."/>
            <person name="Mulligan S."/>
            <person name="Benton J."/>
            <person name="Radune D."/>
            <person name="Fisher D.J."/>
            <person name="Atkins H.S."/>
            <person name="Hiscox T."/>
            <person name="Jost B.H."/>
            <person name="Billington S.J."/>
            <person name="Songer J.G."/>
            <person name="McClane B.A."/>
            <person name="Titball R.W."/>
            <person name="Rood J.I."/>
            <person name="Melville S.B."/>
            <person name="Paulsen I.T."/>
        </authorList>
    </citation>
    <scope>NUCLEOTIDE SEQUENCE [LARGE SCALE GENOMIC DNA]</scope>
    <source>
        <strain>ATCC 13124 / DSM 756 / JCM 1290 / NCIMB 6125 / NCTC 8237 / S 107 / Type A</strain>
    </source>
</reference>
<evidence type="ECO:0000255" key="1">
    <source>
        <dbReference type="HAMAP-Rule" id="MF_00451"/>
    </source>
</evidence>
<name>NDK_CLOP1</name>
<organism>
    <name type="scientific">Clostridium perfringens (strain ATCC 13124 / DSM 756 / JCM 1290 / NCIMB 6125 / NCTC 8237 / Type A)</name>
    <dbReference type="NCBI Taxonomy" id="195103"/>
    <lineage>
        <taxon>Bacteria</taxon>
        <taxon>Bacillati</taxon>
        <taxon>Bacillota</taxon>
        <taxon>Clostridia</taxon>
        <taxon>Eubacteriales</taxon>
        <taxon>Clostridiaceae</taxon>
        <taxon>Clostridium</taxon>
    </lineage>
</organism>
<dbReference type="EC" id="2.7.4.6" evidence="1"/>
<dbReference type="EMBL" id="CP000246">
    <property type="protein sequence ID" value="ABG84997.1"/>
    <property type="molecule type" value="Genomic_DNA"/>
</dbReference>
<dbReference type="RefSeq" id="WP_003451216.1">
    <property type="nucleotide sequence ID" value="NC_008261.1"/>
</dbReference>
<dbReference type="SMR" id="Q0TNY9"/>
<dbReference type="STRING" id="195103.CPF_2227"/>
<dbReference type="PaxDb" id="195103-CPF_2227"/>
<dbReference type="KEGG" id="cpf:CPF_2227"/>
<dbReference type="eggNOG" id="COG0105">
    <property type="taxonomic scope" value="Bacteria"/>
</dbReference>
<dbReference type="HOGENOM" id="CLU_060216_6_3_9"/>
<dbReference type="Proteomes" id="UP000001823">
    <property type="component" value="Chromosome"/>
</dbReference>
<dbReference type="GO" id="GO:0005737">
    <property type="term" value="C:cytoplasm"/>
    <property type="evidence" value="ECO:0007669"/>
    <property type="project" value="UniProtKB-SubCell"/>
</dbReference>
<dbReference type="GO" id="GO:0005524">
    <property type="term" value="F:ATP binding"/>
    <property type="evidence" value="ECO:0007669"/>
    <property type="project" value="UniProtKB-UniRule"/>
</dbReference>
<dbReference type="GO" id="GO:0046872">
    <property type="term" value="F:metal ion binding"/>
    <property type="evidence" value="ECO:0007669"/>
    <property type="project" value="UniProtKB-KW"/>
</dbReference>
<dbReference type="GO" id="GO:0004550">
    <property type="term" value="F:nucleoside diphosphate kinase activity"/>
    <property type="evidence" value="ECO:0007669"/>
    <property type="project" value="UniProtKB-UniRule"/>
</dbReference>
<dbReference type="GO" id="GO:0006241">
    <property type="term" value="P:CTP biosynthetic process"/>
    <property type="evidence" value="ECO:0007669"/>
    <property type="project" value="UniProtKB-UniRule"/>
</dbReference>
<dbReference type="GO" id="GO:0006183">
    <property type="term" value="P:GTP biosynthetic process"/>
    <property type="evidence" value="ECO:0007669"/>
    <property type="project" value="UniProtKB-UniRule"/>
</dbReference>
<dbReference type="GO" id="GO:0006228">
    <property type="term" value="P:UTP biosynthetic process"/>
    <property type="evidence" value="ECO:0007669"/>
    <property type="project" value="UniProtKB-UniRule"/>
</dbReference>
<dbReference type="CDD" id="cd04413">
    <property type="entry name" value="NDPk_I"/>
    <property type="match status" value="1"/>
</dbReference>
<dbReference type="FunFam" id="3.30.70.141:FF:000003">
    <property type="entry name" value="Nucleoside diphosphate kinase"/>
    <property type="match status" value="1"/>
</dbReference>
<dbReference type="Gene3D" id="3.30.70.141">
    <property type="entry name" value="Nucleoside diphosphate kinase-like domain"/>
    <property type="match status" value="1"/>
</dbReference>
<dbReference type="HAMAP" id="MF_00451">
    <property type="entry name" value="NDP_kinase"/>
    <property type="match status" value="1"/>
</dbReference>
<dbReference type="InterPro" id="IPR034907">
    <property type="entry name" value="NDK-like_dom"/>
</dbReference>
<dbReference type="InterPro" id="IPR036850">
    <property type="entry name" value="NDK-like_dom_sf"/>
</dbReference>
<dbReference type="InterPro" id="IPR001564">
    <property type="entry name" value="Nucleoside_diP_kinase"/>
</dbReference>
<dbReference type="InterPro" id="IPR023005">
    <property type="entry name" value="Nucleoside_diP_kinase_AS"/>
</dbReference>
<dbReference type="NCBIfam" id="NF001908">
    <property type="entry name" value="PRK00668.1"/>
    <property type="match status" value="1"/>
</dbReference>
<dbReference type="PANTHER" id="PTHR11349">
    <property type="entry name" value="NUCLEOSIDE DIPHOSPHATE KINASE"/>
    <property type="match status" value="1"/>
</dbReference>
<dbReference type="Pfam" id="PF00334">
    <property type="entry name" value="NDK"/>
    <property type="match status" value="1"/>
</dbReference>
<dbReference type="PRINTS" id="PR01243">
    <property type="entry name" value="NUCDPKINASE"/>
</dbReference>
<dbReference type="SMART" id="SM00562">
    <property type="entry name" value="NDK"/>
    <property type="match status" value="1"/>
</dbReference>
<dbReference type="SUPFAM" id="SSF54919">
    <property type="entry name" value="Nucleoside diphosphate kinase, NDK"/>
    <property type="match status" value="1"/>
</dbReference>
<dbReference type="PROSITE" id="PS00469">
    <property type="entry name" value="NDPK"/>
    <property type="match status" value="1"/>
</dbReference>
<dbReference type="PROSITE" id="PS51374">
    <property type="entry name" value="NDPK_LIKE"/>
    <property type="match status" value="1"/>
</dbReference>
<keyword id="KW-0067">ATP-binding</keyword>
<keyword id="KW-0963">Cytoplasm</keyword>
<keyword id="KW-0418">Kinase</keyword>
<keyword id="KW-0460">Magnesium</keyword>
<keyword id="KW-0479">Metal-binding</keyword>
<keyword id="KW-0546">Nucleotide metabolism</keyword>
<keyword id="KW-0547">Nucleotide-binding</keyword>
<keyword id="KW-0597">Phosphoprotein</keyword>
<keyword id="KW-0808">Transferase</keyword>
<comment type="function">
    <text evidence="1">Major role in the synthesis of nucleoside triphosphates other than ATP. The ATP gamma phosphate is transferred to the NDP beta phosphate via a ping-pong mechanism, using a phosphorylated active-site intermediate.</text>
</comment>
<comment type="catalytic activity">
    <reaction evidence="1">
        <text>a 2'-deoxyribonucleoside 5'-diphosphate + ATP = a 2'-deoxyribonucleoside 5'-triphosphate + ADP</text>
        <dbReference type="Rhea" id="RHEA:44640"/>
        <dbReference type="ChEBI" id="CHEBI:30616"/>
        <dbReference type="ChEBI" id="CHEBI:61560"/>
        <dbReference type="ChEBI" id="CHEBI:73316"/>
        <dbReference type="ChEBI" id="CHEBI:456216"/>
        <dbReference type="EC" id="2.7.4.6"/>
    </reaction>
</comment>
<comment type="catalytic activity">
    <reaction evidence="1">
        <text>a ribonucleoside 5'-diphosphate + ATP = a ribonucleoside 5'-triphosphate + ADP</text>
        <dbReference type="Rhea" id="RHEA:18113"/>
        <dbReference type="ChEBI" id="CHEBI:30616"/>
        <dbReference type="ChEBI" id="CHEBI:57930"/>
        <dbReference type="ChEBI" id="CHEBI:61557"/>
        <dbReference type="ChEBI" id="CHEBI:456216"/>
        <dbReference type="EC" id="2.7.4.6"/>
    </reaction>
</comment>
<comment type="cofactor">
    <cofactor evidence="1">
        <name>Mg(2+)</name>
        <dbReference type="ChEBI" id="CHEBI:18420"/>
    </cofactor>
</comment>
<comment type="subunit">
    <text evidence="1">Homotetramer.</text>
</comment>
<comment type="subcellular location">
    <subcellularLocation>
        <location evidence="1">Cytoplasm</location>
    </subcellularLocation>
</comment>
<comment type="similarity">
    <text evidence="1">Belongs to the NDK family.</text>
</comment>
<proteinExistence type="inferred from homology"/>